<sequence length="501" mass="54625">MSSSGMPDLPAPLTNIKIQHTKLFINNEWHDSVSGKTFPVFNPATEEKICEVEEADKEDVDKAVKAAREAFQMGSPWRTMDASERGQLIYKLADLIERDRLLLATLESINAGKIFASAYLMDLDYCIKVLRYCAGWADKIQGRTIPVDGEFFSYTRHEPIGVCGQIFPWNAPMILLACKIGPALCCGNTVIVKPAEQTPLTALHVASLIKEAGFPPGVVNIVPGYGPTAGAAISSHMDVDKVAFTGSTEVGKMIQEAAAKSNLKRVTLELGAKNPCIVFADADLDSAVEFAHQGVFTNQGQSCIAASKLFVEETIYDEFVQRSVERAKKYVFGNPLTPGVNHGPQINKAQHNKIMELIESGKKEGAKLECGGGPWGNKGYFIQPTIFSNVTDDMRIAKEEIFGPVQQIMKFKSLDEVIKRANNTYYGLVAGVFTKDLDKAVTVSSALQAGTVWVNCYLAASAQSPAGGFKMSGHGREMGEYGIHEYTEVKTVTMKISEKNS</sequence>
<accession>Q29490</accession>
<protein>
    <recommendedName>
        <fullName>Aldehyde dehydrogenase, cytosolic 1</fullName>
        <ecNumber>1.2.1.3</ecNumber>
    </recommendedName>
    <alternativeName>
        <fullName>ALDH class 1</fullName>
    </alternativeName>
    <alternativeName>
        <fullName>ETA-crystallin</fullName>
    </alternativeName>
</protein>
<proteinExistence type="evidence at transcript level"/>
<gene>
    <name type="primary">ALDH1</name>
</gene>
<evidence type="ECO:0000250" key="1"/>
<evidence type="ECO:0000255" key="2">
    <source>
        <dbReference type="PROSITE-ProRule" id="PRU10008"/>
    </source>
</evidence>
<evidence type="ECO:0000305" key="3"/>
<organism>
    <name type="scientific">Macroscelides proboscideus</name>
    <name type="common">Short-eared elephant shrew</name>
    <dbReference type="NCBI Taxonomy" id="29082"/>
    <lineage>
        <taxon>Eukaryota</taxon>
        <taxon>Metazoa</taxon>
        <taxon>Chordata</taxon>
        <taxon>Craniata</taxon>
        <taxon>Vertebrata</taxon>
        <taxon>Euteleostomi</taxon>
        <taxon>Mammalia</taxon>
        <taxon>Eutheria</taxon>
        <taxon>Afrotheria</taxon>
        <taxon>Macroscelidea</taxon>
        <taxon>Macroscelididae</taxon>
        <taxon>Macroscelides</taxon>
    </lineage>
</organism>
<keyword id="KW-0963">Cytoplasm</keyword>
<keyword id="KW-0520">NAD</keyword>
<keyword id="KW-0560">Oxidoreductase</keyword>
<name>ALDH1_MACPR</name>
<reference key="1">
    <citation type="journal article" date="1996" name="J. Biol. Chem.">
        <title>A retinaldehyde dehydrogenase as a structural protein in a mammalian eye lens. Gene recruitment of eta-crystallin.</title>
        <authorList>
            <person name="Graham C."/>
            <person name="Hodin J."/>
            <person name="Wistow G."/>
        </authorList>
    </citation>
    <scope>NUCLEOTIDE SEQUENCE [MRNA]</scope>
    <source>
        <tissue>Eye</tissue>
    </source>
</reference>
<comment type="function">
    <text>Major component of the eye of elephant shrews, which in contrast to other mammals, possesses both a lens- and a non-lens class-1 aldehyde dehydrogenase 1. This eye-specific form is a structural protein of the lens and, in other part of the eye, serves as the major form of ALDH1. Can convert/oxidize retinaldehyde to retinoic acid.</text>
</comment>
<comment type="catalytic activity">
    <reaction>
        <text>an aldehyde + NAD(+) + H2O = a carboxylate + NADH + 2 H(+)</text>
        <dbReference type="Rhea" id="RHEA:16185"/>
        <dbReference type="ChEBI" id="CHEBI:15377"/>
        <dbReference type="ChEBI" id="CHEBI:15378"/>
        <dbReference type="ChEBI" id="CHEBI:17478"/>
        <dbReference type="ChEBI" id="CHEBI:29067"/>
        <dbReference type="ChEBI" id="CHEBI:57540"/>
        <dbReference type="ChEBI" id="CHEBI:57945"/>
        <dbReference type="EC" id="1.2.1.3"/>
    </reaction>
</comment>
<comment type="pathway">
    <text>Alcohol metabolism; ethanol degradation; acetate from ethanol: step 2/2.</text>
</comment>
<comment type="subunit">
    <text evidence="1">Homotetramer.</text>
</comment>
<comment type="subcellular location">
    <subcellularLocation>
        <location evidence="1">Cytoplasm</location>
    </subcellularLocation>
</comment>
<comment type="tissue specificity">
    <text>Eye specific, with very high expression in the lens.</text>
</comment>
<comment type="similarity">
    <text evidence="3">Belongs to the aldehyde dehydrogenase family.</text>
</comment>
<dbReference type="EC" id="1.2.1.3"/>
<dbReference type="EMBL" id="U03906">
    <property type="protein sequence ID" value="AAC48588.1"/>
    <property type="molecule type" value="mRNA"/>
</dbReference>
<dbReference type="SMR" id="Q29490"/>
<dbReference type="UniPathway" id="UPA00780">
    <property type="reaction ID" value="UER00768"/>
</dbReference>
<dbReference type="GO" id="GO:0005737">
    <property type="term" value="C:cytoplasm"/>
    <property type="evidence" value="ECO:0007669"/>
    <property type="project" value="UniProtKB-SubCell"/>
</dbReference>
<dbReference type="GO" id="GO:0004029">
    <property type="term" value="F:aldehyde dehydrogenase (NAD+) activity"/>
    <property type="evidence" value="ECO:0007669"/>
    <property type="project" value="UniProtKB-EC"/>
</dbReference>
<dbReference type="GO" id="GO:0051287">
    <property type="term" value="F:NAD binding"/>
    <property type="evidence" value="ECO:0000250"/>
    <property type="project" value="CAFA"/>
</dbReference>
<dbReference type="GO" id="GO:0006068">
    <property type="term" value="P:ethanol catabolic process"/>
    <property type="evidence" value="ECO:0007669"/>
    <property type="project" value="UniProtKB-UniPathway"/>
</dbReference>
<dbReference type="CDD" id="cd07141">
    <property type="entry name" value="ALDH_F1AB_F2_RALDH1"/>
    <property type="match status" value="1"/>
</dbReference>
<dbReference type="FunFam" id="3.40.605.10:FF:000029">
    <property type="entry name" value="Aldehyde dehydrogenase, mitochondrial"/>
    <property type="match status" value="1"/>
</dbReference>
<dbReference type="FunFam" id="3.40.309.10:FF:000001">
    <property type="entry name" value="Mitochondrial aldehyde dehydrogenase 2"/>
    <property type="match status" value="1"/>
</dbReference>
<dbReference type="Gene3D" id="3.40.605.10">
    <property type="entry name" value="Aldehyde Dehydrogenase, Chain A, domain 1"/>
    <property type="match status" value="1"/>
</dbReference>
<dbReference type="Gene3D" id="3.40.309.10">
    <property type="entry name" value="Aldehyde Dehydrogenase, Chain A, domain 2"/>
    <property type="match status" value="1"/>
</dbReference>
<dbReference type="InterPro" id="IPR016161">
    <property type="entry name" value="Ald_DH/histidinol_DH"/>
</dbReference>
<dbReference type="InterPro" id="IPR016163">
    <property type="entry name" value="Ald_DH_C"/>
</dbReference>
<dbReference type="InterPro" id="IPR016160">
    <property type="entry name" value="Ald_DH_CS_CYS"/>
</dbReference>
<dbReference type="InterPro" id="IPR016162">
    <property type="entry name" value="Ald_DH_N"/>
</dbReference>
<dbReference type="InterPro" id="IPR015590">
    <property type="entry name" value="Aldehyde_DH_dom"/>
</dbReference>
<dbReference type="PANTHER" id="PTHR11699">
    <property type="entry name" value="ALDEHYDE DEHYDROGENASE-RELATED"/>
    <property type="match status" value="1"/>
</dbReference>
<dbReference type="Pfam" id="PF00171">
    <property type="entry name" value="Aldedh"/>
    <property type="match status" value="1"/>
</dbReference>
<dbReference type="SUPFAM" id="SSF53720">
    <property type="entry name" value="ALDH-like"/>
    <property type="match status" value="1"/>
</dbReference>
<dbReference type="PROSITE" id="PS00070">
    <property type="entry name" value="ALDEHYDE_DEHYDR_CYS"/>
    <property type="match status" value="1"/>
</dbReference>
<feature type="chain" id="PRO_0000056428" description="Aldehyde dehydrogenase, cytosolic 1">
    <location>
        <begin position="1"/>
        <end position="501"/>
    </location>
</feature>
<feature type="active site" description="Proton acceptor" evidence="2">
    <location>
        <position position="269"/>
    </location>
</feature>
<feature type="active site" description="Nucleophile" evidence="2">
    <location>
        <position position="303"/>
    </location>
</feature>
<feature type="binding site" evidence="1">
    <location>
        <begin position="246"/>
        <end position="251"/>
    </location>
    <ligand>
        <name>NAD(+)</name>
        <dbReference type="ChEBI" id="CHEBI:57540"/>
    </ligand>
</feature>
<feature type="site" description="Transition state stabilizer" evidence="1">
    <location>
        <position position="170"/>
    </location>
</feature>